<sequence length="247" mass="27309">MSATSTIDPAEVAKFEAMAAEWWNPHGKFKPLHQMNPCRLDYITEQIAAEFDRDLSAPLPFQGLRLLDIGCGGGLLSEPMARLGADVVGADAAPRNIPVARLHAEQSGLTIDYRNTTAEDLAAAGERFDVVLNMEVVEHVADPLAYLTACRELLKPGGLMVCSTLNRNPKSFAMAIVGAEWIMRWLPKGTHDWSKFITPDELYDLIRKAGLDPVDRKGMVFNPVSWSWSLSDRDLSVNYVTASVRPR</sequence>
<gene>
    <name evidence="1" type="primary">ubiG</name>
    <name type="ordered locus">Rsph17025_2768</name>
</gene>
<organism>
    <name type="scientific">Cereibacter sphaeroides (strain ATCC 17025 / ATH 2.4.3)</name>
    <name type="common">Rhodobacter sphaeroides</name>
    <dbReference type="NCBI Taxonomy" id="349102"/>
    <lineage>
        <taxon>Bacteria</taxon>
        <taxon>Pseudomonadati</taxon>
        <taxon>Pseudomonadota</taxon>
        <taxon>Alphaproteobacteria</taxon>
        <taxon>Rhodobacterales</taxon>
        <taxon>Paracoccaceae</taxon>
        <taxon>Cereibacter</taxon>
    </lineage>
</organism>
<keyword id="KW-0489">Methyltransferase</keyword>
<keyword id="KW-0949">S-adenosyl-L-methionine</keyword>
<keyword id="KW-0808">Transferase</keyword>
<keyword id="KW-0831">Ubiquinone biosynthesis</keyword>
<accession>A4WW91</accession>
<reference key="1">
    <citation type="submission" date="2007-04" db="EMBL/GenBank/DDBJ databases">
        <title>Complete sequence of chromosome of Rhodobacter sphaeroides ATCC 17025.</title>
        <authorList>
            <consortium name="US DOE Joint Genome Institute"/>
            <person name="Copeland A."/>
            <person name="Lucas S."/>
            <person name="Lapidus A."/>
            <person name="Barry K."/>
            <person name="Detter J.C."/>
            <person name="Glavina del Rio T."/>
            <person name="Hammon N."/>
            <person name="Israni S."/>
            <person name="Dalin E."/>
            <person name="Tice H."/>
            <person name="Pitluck S."/>
            <person name="Chertkov O."/>
            <person name="Brettin T."/>
            <person name="Bruce D."/>
            <person name="Han C."/>
            <person name="Schmutz J."/>
            <person name="Larimer F."/>
            <person name="Land M."/>
            <person name="Hauser L."/>
            <person name="Kyrpides N."/>
            <person name="Kim E."/>
            <person name="Richardson P."/>
            <person name="Mackenzie C."/>
            <person name="Choudhary M."/>
            <person name="Donohue T.J."/>
            <person name="Kaplan S."/>
        </authorList>
    </citation>
    <scope>NUCLEOTIDE SEQUENCE [LARGE SCALE GENOMIC DNA]</scope>
    <source>
        <strain>ATCC 17025 / ATH 2.4.3</strain>
    </source>
</reference>
<name>UBIG_CERS5</name>
<comment type="function">
    <text evidence="1">O-methyltransferase that catalyzes the 2 O-methylation steps in the ubiquinone biosynthetic pathway.</text>
</comment>
<comment type="catalytic activity">
    <reaction evidence="1">
        <text>a 3-demethylubiquinol + S-adenosyl-L-methionine = a ubiquinol + S-adenosyl-L-homocysteine + H(+)</text>
        <dbReference type="Rhea" id="RHEA:44380"/>
        <dbReference type="Rhea" id="RHEA-COMP:9566"/>
        <dbReference type="Rhea" id="RHEA-COMP:10914"/>
        <dbReference type="ChEBI" id="CHEBI:15378"/>
        <dbReference type="ChEBI" id="CHEBI:17976"/>
        <dbReference type="ChEBI" id="CHEBI:57856"/>
        <dbReference type="ChEBI" id="CHEBI:59789"/>
        <dbReference type="ChEBI" id="CHEBI:84422"/>
        <dbReference type="EC" id="2.1.1.64"/>
    </reaction>
</comment>
<comment type="catalytic activity">
    <reaction evidence="1">
        <text>a 3-(all-trans-polyprenyl)benzene-1,2-diol + S-adenosyl-L-methionine = a 2-methoxy-6-(all-trans-polyprenyl)phenol + S-adenosyl-L-homocysteine + H(+)</text>
        <dbReference type="Rhea" id="RHEA:31411"/>
        <dbReference type="Rhea" id="RHEA-COMP:9550"/>
        <dbReference type="Rhea" id="RHEA-COMP:9551"/>
        <dbReference type="ChEBI" id="CHEBI:15378"/>
        <dbReference type="ChEBI" id="CHEBI:57856"/>
        <dbReference type="ChEBI" id="CHEBI:59789"/>
        <dbReference type="ChEBI" id="CHEBI:62729"/>
        <dbReference type="ChEBI" id="CHEBI:62731"/>
        <dbReference type="EC" id="2.1.1.222"/>
    </reaction>
</comment>
<comment type="pathway">
    <text evidence="1">Cofactor biosynthesis; ubiquinone biosynthesis.</text>
</comment>
<comment type="similarity">
    <text evidence="1">Belongs to the methyltransferase superfamily. UbiG/COQ3 family.</text>
</comment>
<protein>
    <recommendedName>
        <fullName evidence="1">Ubiquinone biosynthesis O-methyltransferase</fullName>
    </recommendedName>
    <alternativeName>
        <fullName evidence="1">2-polyprenyl-6-hydroxyphenol methylase</fullName>
        <ecNumber evidence="1">2.1.1.222</ecNumber>
    </alternativeName>
    <alternativeName>
        <fullName evidence="1">3-demethylubiquinone 3-O-methyltransferase</fullName>
        <ecNumber evidence="1">2.1.1.64</ecNumber>
    </alternativeName>
</protein>
<proteinExistence type="inferred from homology"/>
<evidence type="ECO:0000255" key="1">
    <source>
        <dbReference type="HAMAP-Rule" id="MF_00472"/>
    </source>
</evidence>
<dbReference type="EC" id="2.1.1.222" evidence="1"/>
<dbReference type="EC" id="2.1.1.64" evidence="1"/>
<dbReference type="EMBL" id="CP000661">
    <property type="protein sequence ID" value="ABP71655.1"/>
    <property type="molecule type" value="Genomic_DNA"/>
</dbReference>
<dbReference type="SMR" id="A4WW91"/>
<dbReference type="STRING" id="349102.Rsph17025_2768"/>
<dbReference type="KEGG" id="rsq:Rsph17025_2768"/>
<dbReference type="eggNOG" id="COG2227">
    <property type="taxonomic scope" value="Bacteria"/>
</dbReference>
<dbReference type="HOGENOM" id="CLU_042432_0_0_5"/>
<dbReference type="BioCyc" id="RSPH349102:G1G8M-2849-MONOMER"/>
<dbReference type="UniPathway" id="UPA00232"/>
<dbReference type="GO" id="GO:0102208">
    <property type="term" value="F:2-polyprenyl-6-hydroxyphenol methylase activity"/>
    <property type="evidence" value="ECO:0007669"/>
    <property type="project" value="UniProtKB-EC"/>
</dbReference>
<dbReference type="GO" id="GO:0061542">
    <property type="term" value="F:3-demethylubiquinol 3-O-methyltransferase activity"/>
    <property type="evidence" value="ECO:0007669"/>
    <property type="project" value="UniProtKB-UniRule"/>
</dbReference>
<dbReference type="GO" id="GO:0010420">
    <property type="term" value="F:polyprenyldihydroxybenzoate methyltransferase activity"/>
    <property type="evidence" value="ECO:0007669"/>
    <property type="project" value="InterPro"/>
</dbReference>
<dbReference type="GO" id="GO:0032259">
    <property type="term" value="P:methylation"/>
    <property type="evidence" value="ECO:0007669"/>
    <property type="project" value="UniProtKB-KW"/>
</dbReference>
<dbReference type="CDD" id="cd02440">
    <property type="entry name" value="AdoMet_MTases"/>
    <property type="match status" value="1"/>
</dbReference>
<dbReference type="Gene3D" id="3.40.50.150">
    <property type="entry name" value="Vaccinia Virus protein VP39"/>
    <property type="match status" value="1"/>
</dbReference>
<dbReference type="HAMAP" id="MF_00472">
    <property type="entry name" value="UbiG"/>
    <property type="match status" value="1"/>
</dbReference>
<dbReference type="InterPro" id="IPR029063">
    <property type="entry name" value="SAM-dependent_MTases_sf"/>
</dbReference>
<dbReference type="InterPro" id="IPR010233">
    <property type="entry name" value="UbiG_MeTrfase"/>
</dbReference>
<dbReference type="NCBIfam" id="TIGR01983">
    <property type="entry name" value="UbiG"/>
    <property type="match status" value="1"/>
</dbReference>
<dbReference type="PANTHER" id="PTHR43464">
    <property type="entry name" value="METHYLTRANSFERASE"/>
    <property type="match status" value="1"/>
</dbReference>
<dbReference type="PANTHER" id="PTHR43464:SF19">
    <property type="entry name" value="UBIQUINONE BIOSYNTHESIS O-METHYLTRANSFERASE, MITOCHONDRIAL"/>
    <property type="match status" value="1"/>
</dbReference>
<dbReference type="Pfam" id="PF13489">
    <property type="entry name" value="Methyltransf_23"/>
    <property type="match status" value="1"/>
</dbReference>
<dbReference type="SUPFAM" id="SSF53335">
    <property type="entry name" value="S-adenosyl-L-methionine-dependent methyltransferases"/>
    <property type="match status" value="1"/>
</dbReference>
<feature type="chain" id="PRO_1000013915" description="Ubiquinone biosynthesis O-methyltransferase">
    <location>
        <begin position="1"/>
        <end position="247"/>
    </location>
</feature>
<feature type="binding site" evidence="1">
    <location>
        <position position="39"/>
    </location>
    <ligand>
        <name>S-adenosyl-L-methionine</name>
        <dbReference type="ChEBI" id="CHEBI:59789"/>
    </ligand>
</feature>
<feature type="binding site" evidence="1">
    <location>
        <position position="70"/>
    </location>
    <ligand>
        <name>S-adenosyl-L-methionine</name>
        <dbReference type="ChEBI" id="CHEBI:59789"/>
    </ligand>
</feature>
<feature type="binding site" evidence="1">
    <location>
        <position position="91"/>
    </location>
    <ligand>
        <name>S-adenosyl-L-methionine</name>
        <dbReference type="ChEBI" id="CHEBI:59789"/>
    </ligand>
</feature>
<feature type="binding site" evidence="1">
    <location>
        <position position="134"/>
    </location>
    <ligand>
        <name>S-adenosyl-L-methionine</name>
        <dbReference type="ChEBI" id="CHEBI:59789"/>
    </ligand>
</feature>